<sequence>MASVWKRLQRVGKHASKFQFVASYQELMVECTKKWQPDKLVVVWTRRSRRKSSKAHSWQPGIKNPYRGVVVWPVPENIEITVTLFKDPHAEEFEDKEWTFVIENESPSGRRKALATSSINMKQYASPMPTQTDVKLKFKPLSKKVVSATLQFSLSCIFLREGKATDEDMQSLASLMSMKQADIGNLDDFEEDNEDDDENRVNQEEKAAKITEIVNQLNALSSLDEDQDDCIKQANVPSAKSASSSEELINTLNFLDEAQKDLATVNTNPFDEPDVTELNPFGDPDSEEPITETTSPKKPEESFYNNSCNPFKGVQTPQYLNPFDEPETFVMIKDSPPQSTRRKNLRPVDMSKYLYADSSKSEEELDESNPFYEPKPTSPNNLVNTVQEGETERRVKRRAPAPPAPLAPPAPPAPPALTPKTGVNENTVVSAGKDLSTSPKPSPIPSPVLGQKPNASQSLLAWCREVTKNYRGVKITNFTTSWRNGLSFCAILHHFRPDLIDYKSLNPQDIKENNKKAYDGFASIGISRLLEPSDMVLLAIPDKLTVMTYLYQIRAHFSGQELNVVQIEENSSKSTYKVGNYETDTNSSVDQEKFYAELSDLKREPEPHQPARGAVDLLSQDDSVFVTDSGVGESESEHQTPDDHLSPSTASPYYRRTKSDTEPQKSQQSSARTSGSDDPGLSSSTDSAQALASLGKKRLKAENLELSDLCVSDKKKDVSPLSAYEQKLQTVHASSDMEQGKMEKSRSLECRLDGELAITKPNVSSPSKLGYNRDTDFTKKPCASLRQIESDPDADKSTLNHADHPNKAVQHRMLSRQEELKERARVLLEQARRDAAFKVGSKHGGSAAPALCSRQLNDQQDEERRRQLRERARQLIAEARCGVKMSELPSYGEMAAEKLKERSKASGDENDNIEIDTNEEIPEGFVVGGGDELTNIESDLDNPEQNSKVVDLRLKKLLEAQPQVANLLPSAAQKAVTEASEQGEKSGVEDLRTERLQKATERFRNPVVFNKDSTVRKTQLQSFSQYVENRPEMKRQRSIQEDTKRGTEEKAEITETQRKPSEDEKGFKDTSQYVVGELAALENEQKQIDTRAALVEKRLRYLMDTGRNTEEEEAMMQEWFMLVNKKNALIRRMNQLSLLEKEHDLERRYELLNRELRAMLAIEDWQKTEAQKRREQLLLDELVALVDKRDALVRDLDAQEKQAEEEDEHLERTLEQNKGKMAKKEEKCALQ</sequence>
<protein>
    <recommendedName>
        <fullName>EH domain-binding protein 1</fullName>
    </recommendedName>
</protein>
<evidence type="ECO:0000250" key="1">
    <source>
        <dbReference type="UniProtKB" id="Q8NDI1"/>
    </source>
</evidence>
<evidence type="ECO:0000255" key="2"/>
<evidence type="ECO:0000255" key="3">
    <source>
        <dbReference type="PROSITE-ProRule" id="PRU00044"/>
    </source>
</evidence>
<evidence type="ECO:0000255" key="4">
    <source>
        <dbReference type="PROSITE-ProRule" id="PRU01186"/>
    </source>
</evidence>
<evidence type="ECO:0000255" key="5">
    <source>
        <dbReference type="PROSITE-ProRule" id="PRU01195"/>
    </source>
</evidence>
<evidence type="ECO:0000256" key="6">
    <source>
        <dbReference type="SAM" id="MobiDB-lite"/>
    </source>
</evidence>
<evidence type="ECO:0000269" key="7">
    <source>
    </source>
</evidence>
<evidence type="ECO:0000303" key="8">
    <source>
    </source>
</evidence>
<evidence type="ECO:0000305" key="9"/>
<evidence type="ECO:0007744" key="10">
    <source>
    </source>
</evidence>
<dbReference type="EMBL" id="AF424697">
    <property type="protein sequence ID" value="AAL24806.1"/>
    <property type="molecule type" value="mRNA"/>
</dbReference>
<dbReference type="EMBL" id="AK173055">
    <property type="protein sequence ID" value="BAD32333.1"/>
    <property type="status" value="ALT_INIT"/>
    <property type="molecule type" value="mRNA"/>
</dbReference>
<dbReference type="EMBL" id="AL669858">
    <property type="status" value="NOT_ANNOTATED_CDS"/>
    <property type="molecule type" value="Genomic_DNA"/>
</dbReference>
<dbReference type="EMBL" id="AL731860">
    <property type="status" value="NOT_ANNOTATED_CDS"/>
    <property type="molecule type" value="Genomic_DNA"/>
</dbReference>
<dbReference type="CCDS" id="CCDS24469.1">
    <molecule id="Q69ZW3-2"/>
</dbReference>
<dbReference type="CCDS" id="CCDS56762.1">
    <molecule id="Q69ZW3-1"/>
</dbReference>
<dbReference type="RefSeq" id="NP_001239444.1">
    <molecule id="Q69ZW3-1"/>
    <property type="nucleotide sequence ID" value="NM_001252515.1"/>
</dbReference>
<dbReference type="RefSeq" id="NP_694718.4">
    <molecule id="Q69ZW3-2"/>
    <property type="nucleotide sequence ID" value="NM_153078.4"/>
</dbReference>
<dbReference type="RefSeq" id="XP_036012421.1">
    <molecule id="Q69ZW3-2"/>
    <property type="nucleotide sequence ID" value="XM_036156528.1"/>
</dbReference>
<dbReference type="BMRB" id="Q69ZW3"/>
<dbReference type="SMR" id="Q69ZW3"/>
<dbReference type="BioGRID" id="229762">
    <property type="interactions" value="12"/>
</dbReference>
<dbReference type="CORUM" id="Q69ZW3"/>
<dbReference type="FunCoup" id="Q69ZW3">
    <property type="interactions" value="3368"/>
</dbReference>
<dbReference type="STRING" id="10090.ENSMUSP00000105191"/>
<dbReference type="GlyGen" id="Q69ZW3">
    <property type="glycosylation" value="1 site, 1 N-linked glycan (1 site)"/>
</dbReference>
<dbReference type="iPTMnet" id="Q69ZW3"/>
<dbReference type="PhosphoSitePlus" id="Q69ZW3"/>
<dbReference type="jPOST" id="Q69ZW3"/>
<dbReference type="PaxDb" id="10090-ENSMUSP00000105191"/>
<dbReference type="PeptideAtlas" id="Q69ZW3"/>
<dbReference type="ProteomicsDB" id="277812">
    <molecule id="Q69ZW3-1"/>
</dbReference>
<dbReference type="ProteomicsDB" id="277813">
    <molecule id="Q69ZW3-2"/>
</dbReference>
<dbReference type="Pumba" id="Q69ZW3"/>
<dbReference type="Antibodypedia" id="30724">
    <property type="antibodies" value="79 antibodies from 23 providers"/>
</dbReference>
<dbReference type="DNASU" id="216565"/>
<dbReference type="Ensembl" id="ENSMUST00000045167.11">
    <molecule id="Q69ZW3-2"/>
    <property type="protein sequence ID" value="ENSMUSP00000037489.5"/>
    <property type="gene ID" value="ENSMUSG00000042302.15"/>
</dbReference>
<dbReference type="Ensembl" id="ENSMUST00000109563.9">
    <molecule id="Q69ZW3-1"/>
    <property type="protein sequence ID" value="ENSMUSP00000105191.3"/>
    <property type="gene ID" value="ENSMUSG00000042302.15"/>
</dbReference>
<dbReference type="Ensembl" id="ENSMUST00000180360.8">
    <molecule id="Q69ZW3-2"/>
    <property type="protein sequence ID" value="ENSMUSP00000136697.2"/>
    <property type="gene ID" value="ENSMUSG00000042302.15"/>
</dbReference>
<dbReference type="GeneID" id="216565"/>
<dbReference type="KEGG" id="mmu:216565"/>
<dbReference type="UCSC" id="uc007iea.2">
    <molecule id="Q69ZW3-2"/>
    <property type="organism name" value="mouse"/>
</dbReference>
<dbReference type="UCSC" id="uc007ieb.2">
    <molecule id="Q69ZW3-1"/>
    <property type="organism name" value="mouse"/>
</dbReference>
<dbReference type="AGR" id="MGI:2667252"/>
<dbReference type="CTD" id="23301"/>
<dbReference type="MGI" id="MGI:2667252">
    <property type="gene designation" value="Ehbp1"/>
</dbReference>
<dbReference type="VEuPathDB" id="HostDB:ENSMUSG00000042302"/>
<dbReference type="eggNOG" id="KOG0035">
    <property type="taxonomic scope" value="Eukaryota"/>
</dbReference>
<dbReference type="GeneTree" id="ENSGT00940000157597"/>
<dbReference type="HOGENOM" id="CLU_004178_1_1_1"/>
<dbReference type="InParanoid" id="Q69ZW3"/>
<dbReference type="OMA" id="QQSSCDN"/>
<dbReference type="OrthoDB" id="5972258at2759"/>
<dbReference type="PhylomeDB" id="Q69ZW3"/>
<dbReference type="TreeFam" id="TF105382"/>
<dbReference type="BioGRID-ORCS" id="216565">
    <property type="hits" value="3 hits in 79 CRISPR screens"/>
</dbReference>
<dbReference type="ChiTaRS" id="Ehbp1">
    <property type="organism name" value="mouse"/>
</dbReference>
<dbReference type="PRO" id="PR:Q69ZW3"/>
<dbReference type="Proteomes" id="UP000000589">
    <property type="component" value="Chromosome 11"/>
</dbReference>
<dbReference type="RNAct" id="Q69ZW3">
    <property type="molecule type" value="protein"/>
</dbReference>
<dbReference type="Bgee" id="ENSMUSG00000042302">
    <property type="expression patterns" value="Expressed in floor plate of midbrain and 250 other cell types or tissues"/>
</dbReference>
<dbReference type="ExpressionAtlas" id="Q69ZW3">
    <property type="expression patterns" value="baseline and differential"/>
</dbReference>
<dbReference type="GO" id="GO:0005829">
    <property type="term" value="C:cytosol"/>
    <property type="evidence" value="ECO:0007669"/>
    <property type="project" value="Ensembl"/>
</dbReference>
<dbReference type="GO" id="GO:0005768">
    <property type="term" value="C:endosome"/>
    <property type="evidence" value="ECO:0007669"/>
    <property type="project" value="UniProtKB-SubCell"/>
</dbReference>
<dbReference type="GO" id="GO:0005654">
    <property type="term" value="C:nucleoplasm"/>
    <property type="evidence" value="ECO:0007669"/>
    <property type="project" value="Ensembl"/>
</dbReference>
<dbReference type="GO" id="GO:0005886">
    <property type="term" value="C:plasma membrane"/>
    <property type="evidence" value="ECO:0007669"/>
    <property type="project" value="Ensembl"/>
</dbReference>
<dbReference type="GO" id="GO:0006897">
    <property type="term" value="P:endocytosis"/>
    <property type="evidence" value="ECO:0007669"/>
    <property type="project" value="UniProtKB-KW"/>
</dbReference>
<dbReference type="GO" id="GO:0015031">
    <property type="term" value="P:protein transport"/>
    <property type="evidence" value="ECO:0007669"/>
    <property type="project" value="UniProtKB-KW"/>
</dbReference>
<dbReference type="CDD" id="cd21254">
    <property type="entry name" value="CH_EHBP1"/>
    <property type="match status" value="1"/>
</dbReference>
<dbReference type="FunFam" id="1.10.418.10:FF:000023">
    <property type="entry name" value="EH domain-binding protein 1 isoform X1"/>
    <property type="match status" value="1"/>
</dbReference>
<dbReference type="Gene3D" id="1.10.418.10">
    <property type="entry name" value="Calponin-like domain"/>
    <property type="match status" value="1"/>
</dbReference>
<dbReference type="InterPro" id="IPR022735">
    <property type="entry name" value="bMERB_dom"/>
</dbReference>
<dbReference type="InterPro" id="IPR001715">
    <property type="entry name" value="CH_dom"/>
</dbReference>
<dbReference type="InterPro" id="IPR036872">
    <property type="entry name" value="CH_dom_sf"/>
</dbReference>
<dbReference type="InterPro" id="IPR050540">
    <property type="entry name" value="F-actin_Monoox_Mical"/>
</dbReference>
<dbReference type="InterPro" id="IPR019448">
    <property type="entry name" value="NT-C2"/>
</dbReference>
<dbReference type="PANTHER" id="PTHR23167">
    <property type="entry name" value="CALPONIN HOMOLOGY DOMAIN-CONTAINING PROTEIN DDB_G0272472-RELATED"/>
    <property type="match status" value="1"/>
</dbReference>
<dbReference type="PANTHER" id="PTHR23167:SF43">
    <property type="entry name" value="EH DOMAIN-BINDING PROTEIN 1"/>
    <property type="match status" value="1"/>
</dbReference>
<dbReference type="Pfam" id="PF12130">
    <property type="entry name" value="bMERB_dom"/>
    <property type="match status" value="1"/>
</dbReference>
<dbReference type="Pfam" id="PF00307">
    <property type="entry name" value="CH"/>
    <property type="match status" value="1"/>
</dbReference>
<dbReference type="Pfam" id="PF10358">
    <property type="entry name" value="NT-C2"/>
    <property type="match status" value="1"/>
</dbReference>
<dbReference type="SMART" id="SM00033">
    <property type="entry name" value="CH"/>
    <property type="match status" value="1"/>
</dbReference>
<dbReference type="SMART" id="SM01203">
    <property type="entry name" value="DUF3585"/>
    <property type="match status" value="1"/>
</dbReference>
<dbReference type="SUPFAM" id="SSF47576">
    <property type="entry name" value="Calponin-homology domain, CH-domain"/>
    <property type="match status" value="1"/>
</dbReference>
<dbReference type="PROSITE" id="PS51848">
    <property type="entry name" value="BMERB"/>
    <property type="match status" value="1"/>
</dbReference>
<dbReference type="PROSITE" id="PS51840">
    <property type="entry name" value="C2_NT"/>
    <property type="match status" value="1"/>
</dbReference>
<dbReference type="PROSITE" id="PS50021">
    <property type="entry name" value="CH"/>
    <property type="match status" value="1"/>
</dbReference>
<keyword id="KW-0025">Alternative splicing</keyword>
<keyword id="KW-0175">Coiled coil</keyword>
<keyword id="KW-0963">Cytoplasm</keyword>
<keyword id="KW-0254">Endocytosis</keyword>
<keyword id="KW-0967">Endosome</keyword>
<keyword id="KW-0449">Lipoprotein</keyword>
<keyword id="KW-0472">Membrane</keyword>
<keyword id="KW-0597">Phosphoprotein</keyword>
<keyword id="KW-0636">Prenylation</keyword>
<keyword id="KW-0653">Protein transport</keyword>
<keyword id="KW-1185">Reference proteome</keyword>
<keyword id="KW-0813">Transport</keyword>
<comment type="function">
    <text evidence="1 7">May play a role in actin reorganization. Links clathrin-mediated endocytosis to the actin cytoskeleton. May act as Rab effector protein and play a role in vesicle trafficking (By similarity). Required for perinuclear sorting and insulin-regulated recycling of SLC2A4/GLUT4 in adipocytes.</text>
</comment>
<comment type="subunit">
    <text evidence="1 7">Interacts with EHD1 (PubMed:15247266). Interacts with EHD2. Interacts with RAB8A, RAB10, RAB13 and RAB15 (in their GTP-bound forms); at least in case of RAB8A may bind 2 molecules of RAB8A simultaneously through a high and a low affinity binding site, respectively (By similarity).</text>
</comment>
<comment type="subcellular location">
    <subcellularLocation>
        <location evidence="1">Cytoplasm</location>
    </subcellularLocation>
    <subcellularLocation>
        <location evidence="1">Membrane</location>
    </subcellularLocation>
    <subcellularLocation>
        <location evidence="1">Endosome</location>
    </subcellularLocation>
    <text evidence="1">Mostly found in cytosol and plasma membrane.</text>
</comment>
<comment type="alternative products">
    <event type="alternative splicing"/>
    <isoform>
        <id>Q69ZW3-1</id>
        <name>1</name>
        <sequence type="displayed"/>
    </isoform>
    <isoform>
        <id>Q69ZW3-2</id>
        <name>2</name>
        <sequence type="described" ref="VSP_024836"/>
    </isoform>
</comment>
<comment type="domain">
    <text evidence="1">The CAAX motif is a signal for prenylation and required for endosomal colocalization with Rab8 and Rab10.</text>
</comment>
<comment type="domain">
    <text evidence="1">The bivalent Mical/EHBP Rab binding (bMERB) domain, mediates binding to Rab8, Rab10, Rab10, Rab13 and Rab15 (in their GTP-bound form).</text>
</comment>
<comment type="PTM">
    <text evidence="1">Prenylated (Probable). Farnelysation (predominant) and geranylgeranylation has been observed in vitro.</text>
</comment>
<comment type="sequence caution" evidence="9">
    <conflict type="erroneous initiation">
        <sequence resource="EMBL-CDS" id="BAD32333"/>
    </conflict>
</comment>
<accession>Q69ZW3</accession>
<accession>E9QMJ9</accession>
<accession>Q5SQK3</accession>
<accession>Q91ZJ6</accession>
<name>EHBP1_MOUSE</name>
<reference key="1">
    <citation type="journal article" date="2002" name="BMC Genet.">
        <title>Comparative transcription map of the wobbler critical region on mouse chromosome 11 and the homologous region on human chromosome 2p13-14.</title>
        <authorList>
            <person name="Fuchs S."/>
            <person name="Resch K."/>
            <person name="Thiel C."/>
            <person name="Ulbrich M."/>
            <person name="Platzer M."/>
            <person name="Jockusch H."/>
            <person name="Schmitt-John T."/>
        </authorList>
    </citation>
    <scope>NUCLEOTIDE SEQUENCE [MRNA] (ISOFORM 2)</scope>
    <source>
        <strain>C57BL/6J</strain>
    </source>
</reference>
<reference key="2">
    <citation type="journal article" date="2004" name="DNA Res.">
        <title>Prediction of the coding sequences of mouse homologues of KIAA gene: IV. The complete nucleotide sequences of 500 mouse KIAA-homologous cDNAs identified by screening of terminal sequences of cDNA clones randomly sampled from size-fractionated libraries.</title>
        <authorList>
            <person name="Okazaki N."/>
            <person name="Kikuno R."/>
            <person name="Ohara R."/>
            <person name="Inamoto S."/>
            <person name="Koseki H."/>
            <person name="Hiraoka S."/>
            <person name="Saga Y."/>
            <person name="Seino S."/>
            <person name="Nishimura M."/>
            <person name="Kaisho T."/>
            <person name="Hoshino K."/>
            <person name="Kitamura H."/>
            <person name="Nagase T."/>
            <person name="Ohara O."/>
            <person name="Koga H."/>
        </authorList>
    </citation>
    <scope>NUCLEOTIDE SEQUENCE [LARGE SCALE MRNA] (ISOFORM 1)</scope>
    <source>
        <tissue>Fetal brain</tissue>
    </source>
</reference>
<reference key="3">
    <citation type="journal article" date="2009" name="PLoS Biol.">
        <title>Lineage-specific biology revealed by a finished genome assembly of the mouse.</title>
        <authorList>
            <person name="Church D.M."/>
            <person name="Goodstadt L."/>
            <person name="Hillier L.W."/>
            <person name="Zody M.C."/>
            <person name="Goldstein S."/>
            <person name="She X."/>
            <person name="Bult C.J."/>
            <person name="Agarwala R."/>
            <person name="Cherry J.L."/>
            <person name="DiCuccio M."/>
            <person name="Hlavina W."/>
            <person name="Kapustin Y."/>
            <person name="Meric P."/>
            <person name="Maglott D."/>
            <person name="Birtle Z."/>
            <person name="Marques A.C."/>
            <person name="Graves T."/>
            <person name="Zhou S."/>
            <person name="Teague B."/>
            <person name="Potamousis K."/>
            <person name="Churas C."/>
            <person name="Place M."/>
            <person name="Herschleb J."/>
            <person name="Runnheim R."/>
            <person name="Forrest D."/>
            <person name="Amos-Landgraf J."/>
            <person name="Schwartz D.C."/>
            <person name="Cheng Z."/>
            <person name="Lindblad-Toh K."/>
            <person name="Eichler E.E."/>
            <person name="Ponting C.P."/>
        </authorList>
    </citation>
    <scope>NUCLEOTIDE SEQUENCE [LARGE SCALE GENOMIC DNA]</scope>
    <source>
        <strain>C57BL/6J</strain>
    </source>
</reference>
<reference key="4">
    <citation type="journal article" date="2004" name="J. Biol. Chem.">
        <title>Role of EHD1 and EHBP1 in perinuclear sorting and insulin-regulated GLUT4 recycling in 3T3-L1 adipocytes.</title>
        <authorList>
            <person name="Guilherme A."/>
            <person name="Soriano N.A."/>
            <person name="Furcinitti P.S."/>
            <person name="Czech M.P."/>
        </authorList>
    </citation>
    <scope>FUNCTION</scope>
    <scope>INTERACTION WITH EHD1</scope>
</reference>
<reference key="5">
    <citation type="journal article" date="2004" name="Mol. Cell. Proteomics">
        <title>Phosphoproteomic analysis of the developing mouse brain.</title>
        <authorList>
            <person name="Ballif B.A."/>
            <person name="Villen J."/>
            <person name="Beausoleil S.A."/>
            <person name="Schwartz D."/>
            <person name="Gygi S.P."/>
        </authorList>
    </citation>
    <scope>IDENTIFICATION BY MASS SPECTROMETRY [LARGE SCALE ANALYSIS]</scope>
    <source>
        <tissue>Embryonic brain</tissue>
    </source>
</reference>
<reference key="6">
    <citation type="journal article" date="2010" name="Cell">
        <title>A tissue-specific atlas of mouse protein phosphorylation and expression.</title>
        <authorList>
            <person name="Huttlin E.L."/>
            <person name="Jedrychowski M.P."/>
            <person name="Elias J.E."/>
            <person name="Goswami T."/>
            <person name="Rad R."/>
            <person name="Beausoleil S.A."/>
            <person name="Villen J."/>
            <person name="Haas W."/>
            <person name="Sowa M.E."/>
            <person name="Gygi S.P."/>
        </authorList>
    </citation>
    <scope>PHOSPHORYLATION [LARGE SCALE ANALYSIS] AT SER-171; SER-174; SER-222; THR-328; SER-335; SER-436; SER-442; SER-446; SER-646 AND SER-765</scope>
    <scope>IDENTIFICATION BY MASS SPECTROMETRY [LARGE SCALE ANALYSIS]</scope>
    <source>
        <tissue>Brain</tissue>
        <tissue>Heart</tissue>
        <tissue>Kidney</tissue>
        <tissue>Liver</tissue>
        <tissue>Lung</tissue>
        <tissue>Testis</tissue>
    </source>
</reference>
<proteinExistence type="evidence at protein level"/>
<feature type="chain" id="PRO_0000285203" description="EH domain-binding protein 1">
    <location>
        <begin position="1"/>
        <end position="1231"/>
    </location>
</feature>
<feature type="domain" description="C2 NT-type" evidence="4">
    <location>
        <begin position="8"/>
        <end position="158"/>
    </location>
</feature>
<feature type="domain" description="Calponin-homology (CH)" evidence="3">
    <location>
        <begin position="453"/>
        <end position="558"/>
    </location>
</feature>
<feature type="domain" description="bMERB" evidence="5">
    <location>
        <begin position="1059"/>
        <end position="1212"/>
    </location>
</feature>
<feature type="region of interest" description="Disordered" evidence="6">
    <location>
        <begin position="266"/>
        <end position="310"/>
    </location>
</feature>
<feature type="region of interest" description="Disordered" evidence="6">
    <location>
        <begin position="356"/>
        <end position="452"/>
    </location>
</feature>
<feature type="region of interest" description="Disordered" evidence="6">
    <location>
        <begin position="627"/>
        <end position="689"/>
    </location>
</feature>
<feature type="region of interest" description="Disordered" evidence="6">
    <location>
        <begin position="759"/>
        <end position="817"/>
    </location>
</feature>
<feature type="region of interest" description="Disordered" evidence="6">
    <location>
        <begin position="839"/>
        <end position="868"/>
    </location>
</feature>
<feature type="region of interest" description="Disordered" evidence="6">
    <location>
        <begin position="1030"/>
        <end position="1067"/>
    </location>
</feature>
<feature type="region of interest" description="Disordered" evidence="6">
    <location>
        <begin position="1198"/>
        <end position="1231"/>
    </location>
</feature>
<feature type="coiled-coil region" evidence="2">
    <location>
        <begin position="185"/>
        <end position="219"/>
    </location>
</feature>
<feature type="coiled-coil region" evidence="2">
    <location>
        <begin position="812"/>
        <end position="882"/>
    </location>
</feature>
<feature type="coiled-coil region" evidence="2">
    <location>
        <begin position="1032"/>
        <end position="1100"/>
    </location>
</feature>
<feature type="coiled-coil region" evidence="2">
    <location>
        <begin position="1136"/>
        <end position="1230"/>
    </location>
</feature>
<feature type="short sequence motif" description="CAAX motif" evidence="1">
    <location>
        <begin position="1228"/>
        <end position="1231"/>
    </location>
</feature>
<feature type="compositionally biased region" description="Polar residues" evidence="6">
    <location>
        <begin position="378"/>
        <end position="388"/>
    </location>
</feature>
<feature type="compositionally biased region" description="Pro residues" evidence="6">
    <location>
        <begin position="400"/>
        <end position="417"/>
    </location>
</feature>
<feature type="compositionally biased region" description="Basic and acidic residues" evidence="6">
    <location>
        <begin position="635"/>
        <end position="645"/>
    </location>
</feature>
<feature type="compositionally biased region" description="Polar residues" evidence="6">
    <location>
        <begin position="664"/>
        <end position="689"/>
    </location>
</feature>
<feature type="compositionally biased region" description="Basic and acidic residues" evidence="6">
    <location>
        <begin position="793"/>
        <end position="806"/>
    </location>
</feature>
<feature type="compositionally biased region" description="Basic and acidic residues" evidence="6">
    <location>
        <begin position="1209"/>
        <end position="1231"/>
    </location>
</feature>
<feature type="modified residue" description="Phosphoserine" evidence="10">
    <location>
        <position position="171"/>
    </location>
</feature>
<feature type="modified residue" description="Phosphoserine" evidence="10">
    <location>
        <position position="174"/>
    </location>
</feature>
<feature type="modified residue" description="Phosphoserine" evidence="1">
    <location>
        <position position="177"/>
    </location>
</feature>
<feature type="modified residue" description="Phosphoserine" evidence="10">
    <location>
        <position position="222"/>
    </location>
</feature>
<feature type="modified residue" description="Phosphoserine" evidence="1">
    <location>
        <position position="302"/>
    </location>
</feature>
<feature type="modified residue" description="Phosphoserine" evidence="1">
    <location>
        <position position="307"/>
    </location>
</feature>
<feature type="modified residue" description="Phosphothreonine" evidence="10">
    <location>
        <position position="328"/>
    </location>
</feature>
<feature type="modified residue" description="Phosphoserine" evidence="10">
    <location>
        <position position="335"/>
    </location>
</feature>
<feature type="modified residue" description="Phosphoserine" evidence="10">
    <location>
        <position position="436"/>
    </location>
</feature>
<feature type="modified residue" description="Phosphoserine" evidence="1">
    <location>
        <position position="438"/>
    </location>
</feature>
<feature type="modified residue" description="Phosphoserine" evidence="10">
    <location>
        <position position="442"/>
    </location>
</feature>
<feature type="modified residue" description="Phosphoserine" evidence="10">
    <location>
        <position position="446"/>
    </location>
</feature>
<feature type="modified residue" description="Phosphoserine" evidence="10">
    <location>
        <position position="646"/>
    </location>
</feature>
<feature type="modified residue" description="Phosphoserine" evidence="1">
    <location>
        <position position="719"/>
    </location>
</feature>
<feature type="modified residue" description="Phosphoserine" evidence="10">
    <location>
        <position position="765"/>
    </location>
</feature>
<feature type="modified residue" description="Phosphoserine" evidence="1">
    <location>
        <position position="784"/>
    </location>
</feature>
<feature type="modified residue" description="Phosphoserine" evidence="1">
    <location>
        <position position="1061"/>
    </location>
</feature>
<feature type="splice variant" id="VSP_024836" description="In isoform 2." evidence="8">
    <location>
        <begin position="288"/>
        <end position="312"/>
    </location>
</feature>
<feature type="sequence conflict" description="In Ref. 1; AAL24806." evidence="9" ref="1">
    <original>RR</original>
    <variation>KE</variation>
    <location>
        <begin position="46"/>
        <end position="47"/>
    </location>
</feature>
<feature type="sequence conflict" description="In Ref. 1; AAL24806." evidence="9" ref="1">
    <original>K</original>
    <variation>R</variation>
    <location>
        <position position="51"/>
    </location>
</feature>
<feature type="sequence conflict" description="In Ref. 2; BAD32333." evidence="9" ref="2">
    <original>S</original>
    <variation>N</variation>
    <location>
        <position position="797"/>
    </location>
</feature>
<feature type="sequence conflict" description="In Ref. 1; AAL24806." evidence="9" ref="1">
    <original>T</original>
    <variation>A</variation>
    <location>
        <position position="993"/>
    </location>
</feature>
<feature type="sequence conflict" description="In Ref. 1; AAL24806." evidence="9" ref="1">
    <original>A</original>
    <variation>G</variation>
    <location>
        <position position="999"/>
    </location>
</feature>
<feature type="sequence conflict" description="In Ref. 1; AAL24806." evidence="9" ref="1">
    <original>D</original>
    <variation>G</variation>
    <location>
        <position position="1089"/>
    </location>
</feature>
<feature type="sequence conflict" description="In Ref. 1; AAL24806." evidence="9" ref="1">
    <original>E</original>
    <variation>A</variation>
    <location>
        <position position="1155"/>
    </location>
</feature>
<gene>
    <name type="primary">Ehbp1</name>
    <name type="synonym">Kiaa0903</name>
</gene>
<organism>
    <name type="scientific">Mus musculus</name>
    <name type="common">Mouse</name>
    <dbReference type="NCBI Taxonomy" id="10090"/>
    <lineage>
        <taxon>Eukaryota</taxon>
        <taxon>Metazoa</taxon>
        <taxon>Chordata</taxon>
        <taxon>Craniata</taxon>
        <taxon>Vertebrata</taxon>
        <taxon>Euteleostomi</taxon>
        <taxon>Mammalia</taxon>
        <taxon>Eutheria</taxon>
        <taxon>Euarchontoglires</taxon>
        <taxon>Glires</taxon>
        <taxon>Rodentia</taxon>
        <taxon>Myomorpha</taxon>
        <taxon>Muroidea</taxon>
        <taxon>Muridae</taxon>
        <taxon>Murinae</taxon>
        <taxon>Mus</taxon>
        <taxon>Mus</taxon>
    </lineage>
</organism>